<reference key="1">
    <citation type="journal article" date="2009" name="J. Bacteriol.">
        <title>Complete and draft genome sequences of six members of the Aquificales.</title>
        <authorList>
            <person name="Reysenbach A.-L."/>
            <person name="Hamamura N."/>
            <person name="Podar M."/>
            <person name="Griffiths E."/>
            <person name="Ferreira S."/>
            <person name="Hochstein R."/>
            <person name="Heidelberg J."/>
            <person name="Johnson J."/>
            <person name="Mead D."/>
            <person name="Pohorille A."/>
            <person name="Sarmiento M."/>
            <person name="Schweighofer K."/>
            <person name="Seshadri R."/>
            <person name="Voytek M.A."/>
        </authorList>
    </citation>
    <scope>NUCLEOTIDE SEQUENCE [LARGE SCALE GENOMIC DNA]</scope>
    <source>
        <strain>YO3AOP1</strain>
    </source>
</reference>
<organism>
    <name type="scientific">Sulfurihydrogenibium sp. (strain YO3AOP1)</name>
    <dbReference type="NCBI Taxonomy" id="436114"/>
    <lineage>
        <taxon>Bacteria</taxon>
        <taxon>Pseudomonadati</taxon>
        <taxon>Aquificota</taxon>
        <taxon>Aquificia</taxon>
        <taxon>Aquificales</taxon>
        <taxon>Hydrogenothermaceae</taxon>
        <taxon>Sulfurihydrogenibium</taxon>
    </lineage>
</organism>
<accession>B2VAB3</accession>
<evidence type="ECO:0000255" key="1">
    <source>
        <dbReference type="HAMAP-Rule" id="MF_00012"/>
    </source>
</evidence>
<gene>
    <name evidence="1" type="primary">ilvD</name>
    <name type="ordered locus">SYO3AOP1_1275</name>
</gene>
<proteinExistence type="inferred from homology"/>
<dbReference type="EC" id="4.2.1.9" evidence="1"/>
<dbReference type="EMBL" id="CP001080">
    <property type="protein sequence ID" value="ACD66886.1"/>
    <property type="molecule type" value="Genomic_DNA"/>
</dbReference>
<dbReference type="RefSeq" id="WP_012459947.1">
    <property type="nucleotide sequence ID" value="NC_010730.1"/>
</dbReference>
<dbReference type="SMR" id="B2VAB3"/>
<dbReference type="STRING" id="436114.SYO3AOP1_1275"/>
<dbReference type="KEGG" id="sul:SYO3AOP1_1275"/>
<dbReference type="eggNOG" id="COG0129">
    <property type="taxonomic scope" value="Bacteria"/>
</dbReference>
<dbReference type="HOGENOM" id="CLU_014271_4_2_0"/>
<dbReference type="UniPathway" id="UPA00047">
    <property type="reaction ID" value="UER00057"/>
</dbReference>
<dbReference type="UniPathway" id="UPA00049">
    <property type="reaction ID" value="UER00061"/>
</dbReference>
<dbReference type="GO" id="GO:0005829">
    <property type="term" value="C:cytosol"/>
    <property type="evidence" value="ECO:0007669"/>
    <property type="project" value="TreeGrafter"/>
</dbReference>
<dbReference type="GO" id="GO:0051537">
    <property type="term" value="F:2 iron, 2 sulfur cluster binding"/>
    <property type="evidence" value="ECO:0007669"/>
    <property type="project" value="UniProtKB-UniRule"/>
</dbReference>
<dbReference type="GO" id="GO:0004160">
    <property type="term" value="F:dihydroxy-acid dehydratase activity"/>
    <property type="evidence" value="ECO:0007669"/>
    <property type="project" value="UniProtKB-UniRule"/>
</dbReference>
<dbReference type="GO" id="GO:0000287">
    <property type="term" value="F:magnesium ion binding"/>
    <property type="evidence" value="ECO:0007669"/>
    <property type="project" value="UniProtKB-UniRule"/>
</dbReference>
<dbReference type="GO" id="GO:0009097">
    <property type="term" value="P:isoleucine biosynthetic process"/>
    <property type="evidence" value="ECO:0007669"/>
    <property type="project" value="UniProtKB-UniRule"/>
</dbReference>
<dbReference type="GO" id="GO:0009099">
    <property type="term" value="P:L-valine biosynthetic process"/>
    <property type="evidence" value="ECO:0007669"/>
    <property type="project" value="UniProtKB-UniRule"/>
</dbReference>
<dbReference type="FunFam" id="3.50.30.80:FF:000001">
    <property type="entry name" value="Dihydroxy-acid dehydratase"/>
    <property type="match status" value="1"/>
</dbReference>
<dbReference type="Gene3D" id="3.50.30.80">
    <property type="entry name" value="IlvD/EDD C-terminal domain-like"/>
    <property type="match status" value="1"/>
</dbReference>
<dbReference type="HAMAP" id="MF_00012">
    <property type="entry name" value="IlvD"/>
    <property type="match status" value="1"/>
</dbReference>
<dbReference type="InterPro" id="IPR042096">
    <property type="entry name" value="Dihydro-acid_dehy_C"/>
</dbReference>
<dbReference type="InterPro" id="IPR004404">
    <property type="entry name" value="DihydroxyA_deHydtase"/>
</dbReference>
<dbReference type="InterPro" id="IPR020558">
    <property type="entry name" value="DiOHA_6PGluconate_deHydtase_CS"/>
</dbReference>
<dbReference type="InterPro" id="IPR056740">
    <property type="entry name" value="ILV_EDD_C"/>
</dbReference>
<dbReference type="InterPro" id="IPR000581">
    <property type="entry name" value="ILV_EDD_N"/>
</dbReference>
<dbReference type="InterPro" id="IPR037237">
    <property type="entry name" value="IlvD/EDD_N"/>
</dbReference>
<dbReference type="NCBIfam" id="TIGR00110">
    <property type="entry name" value="ilvD"/>
    <property type="match status" value="1"/>
</dbReference>
<dbReference type="NCBIfam" id="NF002068">
    <property type="entry name" value="PRK00911.1"/>
    <property type="match status" value="1"/>
</dbReference>
<dbReference type="PANTHER" id="PTHR43661">
    <property type="entry name" value="D-XYLONATE DEHYDRATASE"/>
    <property type="match status" value="1"/>
</dbReference>
<dbReference type="PANTHER" id="PTHR43661:SF3">
    <property type="entry name" value="D-XYLONATE DEHYDRATASE YAGF-RELATED"/>
    <property type="match status" value="1"/>
</dbReference>
<dbReference type="Pfam" id="PF24877">
    <property type="entry name" value="ILV_EDD_C"/>
    <property type="match status" value="1"/>
</dbReference>
<dbReference type="Pfam" id="PF00920">
    <property type="entry name" value="ILVD_EDD_N"/>
    <property type="match status" value="1"/>
</dbReference>
<dbReference type="SUPFAM" id="SSF143975">
    <property type="entry name" value="IlvD/EDD N-terminal domain-like"/>
    <property type="match status" value="1"/>
</dbReference>
<dbReference type="SUPFAM" id="SSF52016">
    <property type="entry name" value="LeuD/IlvD-like"/>
    <property type="match status" value="1"/>
</dbReference>
<dbReference type="PROSITE" id="PS00886">
    <property type="entry name" value="ILVD_EDD_1"/>
    <property type="match status" value="1"/>
</dbReference>
<dbReference type="PROSITE" id="PS00887">
    <property type="entry name" value="ILVD_EDD_2"/>
    <property type="match status" value="1"/>
</dbReference>
<name>ILVD_SULSY</name>
<keyword id="KW-0001">2Fe-2S</keyword>
<keyword id="KW-0028">Amino-acid biosynthesis</keyword>
<keyword id="KW-0100">Branched-chain amino acid biosynthesis</keyword>
<keyword id="KW-0408">Iron</keyword>
<keyword id="KW-0411">Iron-sulfur</keyword>
<keyword id="KW-0456">Lyase</keyword>
<keyword id="KW-0460">Magnesium</keyword>
<keyword id="KW-0479">Metal-binding</keyword>
<comment type="function">
    <text evidence="1">Functions in the biosynthesis of branched-chain amino acids. Catalyzes the dehydration of (2R,3R)-2,3-dihydroxy-3-methylpentanoate (2,3-dihydroxy-3-methylvalerate) into 2-oxo-3-methylpentanoate (2-oxo-3-methylvalerate) and of (2R)-2,3-dihydroxy-3-methylbutanoate (2,3-dihydroxyisovalerate) into 2-oxo-3-methylbutanoate (2-oxoisovalerate), the penultimate precursor to L-isoleucine and L-valine, respectively.</text>
</comment>
<comment type="catalytic activity">
    <reaction evidence="1">
        <text>(2R)-2,3-dihydroxy-3-methylbutanoate = 3-methyl-2-oxobutanoate + H2O</text>
        <dbReference type="Rhea" id="RHEA:24809"/>
        <dbReference type="ChEBI" id="CHEBI:11851"/>
        <dbReference type="ChEBI" id="CHEBI:15377"/>
        <dbReference type="ChEBI" id="CHEBI:49072"/>
        <dbReference type="EC" id="4.2.1.9"/>
    </reaction>
    <physiologicalReaction direction="left-to-right" evidence="1">
        <dbReference type="Rhea" id="RHEA:24810"/>
    </physiologicalReaction>
</comment>
<comment type="catalytic activity">
    <reaction evidence="1">
        <text>(2R,3R)-2,3-dihydroxy-3-methylpentanoate = (S)-3-methyl-2-oxopentanoate + H2O</text>
        <dbReference type="Rhea" id="RHEA:27694"/>
        <dbReference type="ChEBI" id="CHEBI:15377"/>
        <dbReference type="ChEBI" id="CHEBI:35146"/>
        <dbReference type="ChEBI" id="CHEBI:49258"/>
        <dbReference type="EC" id="4.2.1.9"/>
    </reaction>
    <physiologicalReaction direction="left-to-right" evidence="1">
        <dbReference type="Rhea" id="RHEA:27695"/>
    </physiologicalReaction>
</comment>
<comment type="cofactor">
    <cofactor evidence="1">
        <name>[2Fe-2S] cluster</name>
        <dbReference type="ChEBI" id="CHEBI:190135"/>
    </cofactor>
    <text evidence="1">Binds 1 [2Fe-2S] cluster per subunit. This cluster acts as a Lewis acid cofactor.</text>
</comment>
<comment type="cofactor">
    <cofactor evidence="1">
        <name>Mg(2+)</name>
        <dbReference type="ChEBI" id="CHEBI:18420"/>
    </cofactor>
</comment>
<comment type="pathway">
    <text evidence="1">Amino-acid biosynthesis; L-isoleucine biosynthesis; L-isoleucine from 2-oxobutanoate: step 3/4.</text>
</comment>
<comment type="pathway">
    <text evidence="1">Amino-acid biosynthesis; L-valine biosynthesis; L-valine from pyruvate: step 3/4.</text>
</comment>
<comment type="subunit">
    <text evidence="1">Homodimer.</text>
</comment>
<comment type="similarity">
    <text evidence="1">Belongs to the IlvD/Edd family.</text>
</comment>
<sequence length="557" mass="59746">MRSDEIKKGIERAPHRSLLRACGLKEEDFGKPFIGIANSYIDIIPGHVHLQEFAKIVKEAIREAGGVPFEFNVIGVDDGIAMGHSGMFYSLPSRELIADSVETVVQAHKLDGLVLIPNCDKIVPGMIMAAARVNIPTILVSGGPMAAGHTSDGKPIDLATVFEAVGGIKKGLIDEKQLIDIETHACPTCGSCSGMFTANSMNCLAEALGIALPGNGSILAIDPRRKELAKQAGRQIVELVKAGLKFRDIVNQETIENAFTLDIAMGGSSNTVLHLLAISHEAGIEFPMEKIDEISRKTPTLCKLAPASQYHMEDLDKAGGIYAILKELSKKNLLHLDRPTVLMKTIGEAIKDAEIKDTNVIRPLENPYNETGGLAVLFGNLAPDGAVVKAAAVDPKILVHRGTAVVFDSEEEAIEGITNGKVKEGNVVVIRYEGPKGGPGMREMLAPTSTIMGMGLGDKVSLITDGRFSGATRGACIGHVSPEAAAGGPIGIVQNGDEILIDIPNRKIELLISEQEFERRMKEFKPKKKEIPSPWLRRYSKFVTSANKGAILSDECS</sequence>
<feature type="chain" id="PRO_1000089422" description="Dihydroxy-acid dehydratase">
    <location>
        <begin position="1"/>
        <end position="557"/>
    </location>
</feature>
<feature type="active site" description="Proton acceptor" evidence="1">
    <location>
        <position position="469"/>
    </location>
</feature>
<feature type="binding site" evidence="1">
    <location>
        <position position="78"/>
    </location>
    <ligand>
        <name>Mg(2+)</name>
        <dbReference type="ChEBI" id="CHEBI:18420"/>
    </ligand>
</feature>
<feature type="binding site" evidence="1">
    <location>
        <position position="119"/>
    </location>
    <ligand>
        <name>[2Fe-2S] cluster</name>
        <dbReference type="ChEBI" id="CHEBI:190135"/>
    </ligand>
</feature>
<feature type="binding site" evidence="1">
    <location>
        <position position="120"/>
    </location>
    <ligand>
        <name>Mg(2+)</name>
        <dbReference type="ChEBI" id="CHEBI:18420"/>
    </ligand>
</feature>
<feature type="binding site" description="via carbamate group" evidence="1">
    <location>
        <position position="121"/>
    </location>
    <ligand>
        <name>Mg(2+)</name>
        <dbReference type="ChEBI" id="CHEBI:18420"/>
    </ligand>
</feature>
<feature type="binding site" evidence="1">
    <location>
        <position position="192"/>
    </location>
    <ligand>
        <name>[2Fe-2S] cluster</name>
        <dbReference type="ChEBI" id="CHEBI:190135"/>
    </ligand>
</feature>
<feature type="binding site" evidence="1">
    <location>
        <position position="443"/>
    </location>
    <ligand>
        <name>Mg(2+)</name>
        <dbReference type="ChEBI" id="CHEBI:18420"/>
    </ligand>
</feature>
<feature type="modified residue" description="N6-carboxylysine" evidence="1">
    <location>
        <position position="121"/>
    </location>
</feature>
<protein>
    <recommendedName>
        <fullName evidence="1">Dihydroxy-acid dehydratase</fullName>
        <shortName evidence="1">DAD</shortName>
        <ecNumber evidence="1">4.2.1.9</ecNumber>
    </recommendedName>
</protein>